<proteinExistence type="evidence at protein level"/>
<protein>
    <recommendedName>
        <fullName evidence="8">Iripin-2</fullName>
    </recommendedName>
    <alternativeName>
        <fullName evidence="6">I ricinus serpin-2</fullName>
        <shortName evidence="6 7">IRS-2</shortName>
    </alternativeName>
</protein>
<sequence>MEDFKMKTLAAFLSLLVLCWAQEEAKLTKANNRFGLRLLRALPSGPEKNVFFSPYSVSAAMGMAFAGARGQTQQELSQGLGFSDVDLTDAGVLDAYTHHTERLKSTPSNSTLDVANAAAIQRTLALLNSYESALQSSFGAELHKVDFAGEPQAAVDFVNNWVKRKTHDKIEKLFNEPLDPDTLLVLLNAIYFKGEWNTAFVKEHTEKRQFFNGGVTPVEVDTMRLEARIKYRFFDDLQVEVVELPYRGLDYTMAILLPKENTGVEGLKQNLTVDRFQNYLSDLRERKITVLLPKFKLETKYSLKAPLQSLGIKQIFESGADLSGINDERLRVSAVEHKAVVEVNEEGTVAAATTGVVIVPYSLGPEPVVFRVDHPFLFFIRNTRTDDIFFVGQVNKL</sequence>
<organism evidence="9">
    <name type="scientific">Ixodes ricinus</name>
    <name type="common">Common tick</name>
    <name type="synonym">Acarus ricinus</name>
    <dbReference type="NCBI Taxonomy" id="34613"/>
    <lineage>
        <taxon>Eukaryota</taxon>
        <taxon>Metazoa</taxon>
        <taxon>Ecdysozoa</taxon>
        <taxon>Arthropoda</taxon>
        <taxon>Chelicerata</taxon>
        <taxon>Arachnida</taxon>
        <taxon>Acari</taxon>
        <taxon>Parasitiformes</taxon>
        <taxon>Ixodida</taxon>
        <taxon>Ixodoidea</taxon>
        <taxon>Ixodidae</taxon>
        <taxon>Ixodinae</taxon>
        <taxon>Ixodes</taxon>
    </lineage>
</organism>
<comment type="function">
    <text evidence="4">Serine protease inhibitor that modulates blood feeding of ticks on vertebrate species (PubMed:20940421). Inhibits host trypsin, thrombin (F2), alpha-chymotrypsin, cathepsin G (CTSG) and mast cell chymase (CMA1) (PubMed:20940421). Inhibits host cathepsin G- and thrombin-induced platelet aggregation (PubMed:20940421). Inhibits acute inflammation in the host (PubMed:20940421). Suppresses neutrophil recruitment in inflamed area (PubMed:20940421). Does not inhibit host plasmin (PLG), factor Xa (F10), factor XIa (F11), elastase and proteinase 3/myeloblastin (PRTN3) (PubMed:20940421).</text>
</comment>
<comment type="function">
    <text evidence="5">(Microbial infection) Inhibits IL6 production by mouse splenic dendritic cells in response to Borrelia burgdorferi exposure (PubMed:25712932). Decreases levels of STAT3 phosphorylation in mouse splenic dendritic cells in response to Borrelia burgdorferi exposure and in Borrelia-primed CD4+ T-lymphocytes (PubMed:25712932). Inhibits differentiation of mouse Th17 cells, a subset of CD4+ T-lymphocytes that play a crucial role in protection against extracellular bacteria, in response to Borrelia burgdorferi exposure via inhibition of the IL6/STAT3 signaling pathway (PubMed:25712932).</text>
</comment>
<comment type="subunit">
    <text evidence="4">Interacts with mouse MCPT4.</text>
</comment>
<comment type="subcellular location">
    <subcellularLocation>
        <location evidence="1">Secreted</location>
    </subcellularLocation>
</comment>
<comment type="tissue specificity">
    <text evidence="4">Female salivary gland (PubMed:20940421). Ovary (PubMed:20940421). Midgut (PubMed:20940421).</text>
</comment>
<comment type="induction">
    <text evidence="4">Induced by blood feeding.</text>
</comment>
<comment type="similarity">
    <text evidence="8">Belongs to the serpin family.</text>
</comment>
<keyword id="KW-0002">3D-structure</keyword>
<keyword id="KW-0325">Glycoprotein</keyword>
<keyword id="KW-1199">Hemostasis impairing toxin</keyword>
<keyword id="KW-0391">Immunity</keyword>
<keyword id="KW-1201">Platelet aggregation inhibiting toxin</keyword>
<keyword id="KW-0646">Protease inhibitor</keyword>
<keyword id="KW-0964">Secreted</keyword>
<keyword id="KW-0722">Serine protease inhibitor</keyword>
<keyword id="KW-0732">Signal</keyword>
<keyword id="KW-0800">Toxin</keyword>
<accession>Q06B74</accession>
<evidence type="ECO:0000250" key="1">
    <source>
        <dbReference type="UniProtKB" id="Q06B72"/>
    </source>
</evidence>
<evidence type="ECO:0000255" key="2"/>
<evidence type="ECO:0000255" key="3">
    <source>
        <dbReference type="PROSITE-ProRule" id="PRU00498"/>
    </source>
</evidence>
<evidence type="ECO:0000269" key="4">
    <source>
    </source>
</evidence>
<evidence type="ECO:0000269" key="5">
    <source>
    </source>
</evidence>
<evidence type="ECO:0000303" key="6">
    <source>
    </source>
</evidence>
<evidence type="ECO:0000303" key="7">
    <source>
    </source>
</evidence>
<evidence type="ECO:0000305" key="8"/>
<evidence type="ECO:0000312" key="9">
    <source>
        <dbReference type="EMBL" id="ABI94056.2"/>
    </source>
</evidence>
<evidence type="ECO:0007744" key="10">
    <source>
        <dbReference type="PDB" id="3NDA"/>
    </source>
</evidence>
<evidence type="ECO:0007829" key="11">
    <source>
        <dbReference type="PDB" id="3NDA"/>
    </source>
</evidence>
<dbReference type="EMBL" id="DQ915843">
    <property type="protein sequence ID" value="ABI94056.2"/>
    <property type="molecule type" value="mRNA"/>
</dbReference>
<dbReference type="PDB" id="3NDA">
    <property type="method" value="X-ray"/>
    <property type="resolution" value="1.80 A"/>
    <property type="chains" value="A/B=22-397"/>
</dbReference>
<dbReference type="PDBsum" id="3NDA"/>
<dbReference type="SMR" id="Q06B74"/>
<dbReference type="MEROPS" id="I04.088"/>
<dbReference type="EvolutionaryTrace" id="Q06B74"/>
<dbReference type="GO" id="GO:0005615">
    <property type="term" value="C:extracellular space"/>
    <property type="evidence" value="ECO:0007669"/>
    <property type="project" value="InterPro"/>
</dbReference>
<dbReference type="GO" id="GO:0004867">
    <property type="term" value="F:serine-type endopeptidase inhibitor activity"/>
    <property type="evidence" value="ECO:0007669"/>
    <property type="project" value="UniProtKB-KW"/>
</dbReference>
<dbReference type="GO" id="GO:0090729">
    <property type="term" value="F:toxin activity"/>
    <property type="evidence" value="ECO:0007669"/>
    <property type="project" value="UniProtKB-KW"/>
</dbReference>
<dbReference type="GO" id="GO:0002376">
    <property type="term" value="P:immune system process"/>
    <property type="evidence" value="ECO:0007669"/>
    <property type="project" value="UniProtKB-KW"/>
</dbReference>
<dbReference type="CDD" id="cd19577">
    <property type="entry name" value="serpinJ_IRS-2-like"/>
    <property type="match status" value="1"/>
</dbReference>
<dbReference type="FunFam" id="3.30.497.10:FF:000031">
    <property type="entry name" value="Putative salivary serpin"/>
    <property type="match status" value="2"/>
</dbReference>
<dbReference type="Gene3D" id="2.30.39.10">
    <property type="entry name" value="Alpha-1-antitrypsin, domain 1"/>
    <property type="match status" value="1"/>
</dbReference>
<dbReference type="Gene3D" id="3.30.497.10">
    <property type="entry name" value="Antithrombin, subunit I, domain 2"/>
    <property type="match status" value="1"/>
</dbReference>
<dbReference type="InterPro" id="IPR023795">
    <property type="entry name" value="Serpin_CS"/>
</dbReference>
<dbReference type="InterPro" id="IPR023796">
    <property type="entry name" value="Serpin_dom"/>
</dbReference>
<dbReference type="InterPro" id="IPR000215">
    <property type="entry name" value="Serpin_fam"/>
</dbReference>
<dbReference type="InterPro" id="IPR036186">
    <property type="entry name" value="Serpin_sf"/>
</dbReference>
<dbReference type="InterPro" id="IPR042178">
    <property type="entry name" value="Serpin_sf_1"/>
</dbReference>
<dbReference type="InterPro" id="IPR042185">
    <property type="entry name" value="Serpin_sf_2"/>
</dbReference>
<dbReference type="PANTHER" id="PTHR11461:SF211">
    <property type="entry name" value="GH10112P-RELATED"/>
    <property type="match status" value="1"/>
</dbReference>
<dbReference type="PANTHER" id="PTHR11461">
    <property type="entry name" value="SERINE PROTEASE INHIBITOR, SERPIN"/>
    <property type="match status" value="1"/>
</dbReference>
<dbReference type="Pfam" id="PF00079">
    <property type="entry name" value="Serpin"/>
    <property type="match status" value="1"/>
</dbReference>
<dbReference type="SMART" id="SM00093">
    <property type="entry name" value="SERPIN"/>
    <property type="match status" value="1"/>
</dbReference>
<dbReference type="SUPFAM" id="SSF56574">
    <property type="entry name" value="Serpins"/>
    <property type="match status" value="1"/>
</dbReference>
<dbReference type="PROSITE" id="PS00284">
    <property type="entry name" value="SERPIN"/>
    <property type="match status" value="1"/>
</dbReference>
<feature type="signal peptide" evidence="2">
    <location>
        <begin position="1"/>
        <end position="21"/>
    </location>
</feature>
<feature type="chain" id="PRO_5004165292" description="Iripin-2" evidence="2">
    <location>
        <begin position="22"/>
        <end position="397"/>
    </location>
</feature>
<feature type="glycosylation site" description="N-linked (GlcNAc...) asparagine" evidence="3">
    <location>
        <position position="109"/>
    </location>
</feature>
<feature type="glycosylation site" description="N-linked (GlcNAc...) asparagine" evidence="3">
    <location>
        <position position="270"/>
    </location>
</feature>
<feature type="helix" evidence="11">
    <location>
        <begin position="23"/>
        <end position="41"/>
    </location>
</feature>
<feature type="strand" evidence="11">
    <location>
        <begin position="50"/>
        <end position="52"/>
    </location>
</feature>
<feature type="helix" evidence="11">
    <location>
        <begin position="54"/>
        <end position="65"/>
    </location>
</feature>
<feature type="helix" evidence="11">
    <location>
        <begin position="70"/>
        <end position="79"/>
    </location>
</feature>
<feature type="turn" evidence="11">
    <location>
        <begin position="80"/>
        <end position="82"/>
    </location>
</feature>
<feature type="helix" evidence="11">
    <location>
        <begin position="83"/>
        <end position="85"/>
    </location>
</feature>
<feature type="helix" evidence="11">
    <location>
        <begin position="89"/>
        <end position="105"/>
    </location>
</feature>
<feature type="strand" evidence="11">
    <location>
        <begin position="109"/>
        <end position="121"/>
    </location>
</feature>
<feature type="helix" evidence="11">
    <location>
        <begin position="128"/>
        <end position="138"/>
    </location>
</feature>
<feature type="strand" evidence="11">
    <location>
        <begin position="141"/>
        <end position="145"/>
    </location>
</feature>
<feature type="turn" evidence="11">
    <location>
        <begin position="147"/>
        <end position="149"/>
    </location>
</feature>
<feature type="helix" evidence="11">
    <location>
        <begin position="151"/>
        <end position="165"/>
    </location>
</feature>
<feature type="turn" evidence="11">
    <location>
        <begin position="166"/>
        <end position="168"/>
    </location>
</feature>
<feature type="strand" evidence="11">
    <location>
        <begin position="184"/>
        <end position="198"/>
    </location>
</feature>
<feature type="helix" evidence="11">
    <location>
        <begin position="202"/>
        <end position="204"/>
    </location>
</feature>
<feature type="strand" evidence="11">
    <location>
        <begin position="206"/>
        <end position="212"/>
    </location>
</feature>
<feature type="turn" evidence="11">
    <location>
        <begin position="213"/>
        <end position="215"/>
    </location>
</feature>
<feature type="strand" evidence="11">
    <location>
        <begin position="216"/>
        <end position="234"/>
    </location>
</feature>
<feature type="turn" evidence="11">
    <location>
        <begin position="235"/>
        <end position="238"/>
    </location>
</feature>
<feature type="strand" evidence="11">
    <location>
        <begin position="239"/>
        <end position="246"/>
    </location>
</feature>
<feature type="strand" evidence="11">
    <location>
        <begin position="249"/>
        <end position="260"/>
    </location>
</feature>
<feature type="helix" evidence="11">
    <location>
        <begin position="264"/>
        <end position="270"/>
    </location>
</feature>
<feature type="helix" evidence="11">
    <location>
        <begin position="273"/>
        <end position="282"/>
    </location>
</feature>
<feature type="strand" evidence="11">
    <location>
        <begin position="284"/>
        <end position="293"/>
    </location>
</feature>
<feature type="strand" evidence="11">
    <location>
        <begin position="295"/>
        <end position="302"/>
    </location>
</feature>
<feature type="helix" evidence="11">
    <location>
        <begin position="304"/>
        <end position="309"/>
    </location>
</feature>
<feature type="helix" evidence="11">
    <location>
        <begin position="314"/>
        <end position="316"/>
    </location>
</feature>
<feature type="helix" evidence="11">
    <location>
        <begin position="323"/>
        <end position="326"/>
    </location>
</feature>
<feature type="strand" evidence="11">
    <location>
        <begin position="330"/>
        <end position="343"/>
    </location>
</feature>
<feature type="strand" evidence="11">
    <location>
        <begin position="345"/>
        <end position="360"/>
    </location>
</feature>
<feature type="strand" evidence="11">
    <location>
        <begin position="369"/>
        <end position="371"/>
    </location>
</feature>
<feature type="strand" evidence="11">
    <location>
        <begin position="376"/>
        <end position="382"/>
    </location>
</feature>
<feature type="turn" evidence="11">
    <location>
        <begin position="383"/>
        <end position="385"/>
    </location>
</feature>
<feature type="strand" evidence="11">
    <location>
        <begin position="388"/>
        <end position="394"/>
    </location>
</feature>
<name>IRS2_IXORI</name>
<reference evidence="9 10" key="1">
    <citation type="journal article" date="2011" name="Blood">
        <title>A tick salivary protein targets cathepsin G and chymase and inhibits host inflammation and platelet aggregation.</title>
        <authorList>
            <person name="Chmelar J."/>
            <person name="Oliveira C.J."/>
            <person name="Rezacova P."/>
            <person name="Francischetti I.M."/>
            <person name="Kovarova Z."/>
            <person name="Pejler G."/>
            <person name="Kopacek P."/>
            <person name="Ribeiro J.M."/>
            <person name="Mares M."/>
            <person name="Kopecky J."/>
            <person name="Kotsyfakis M."/>
        </authorList>
    </citation>
    <scope>NUCLEOTIDE SEQUENCE [MRNA]</scope>
    <scope>X-RAY CRYSTALLOGRAPHY (1.80 ANGSTROMS) OF 22-397</scope>
    <scope>FUNCTION</scope>
    <scope>INTERACTION WITH MOUSE MCPT4</scope>
    <scope>TISSUE SPECIFICITY</scope>
    <scope>INDUCTION BY BLOOD FEEDING</scope>
    <source>
        <tissue evidence="9">Salivary gland</tissue>
    </source>
</reference>
<reference key="2">
    <citation type="journal article" date="2015" name="Infect. Immun.">
        <title>Ixodes ricinus salivary serpin IRS-2 affects Th17 differentiation via inhibition of the interleukin-6/STAT-3 signaling pathway.</title>
        <authorList>
            <person name="Palenikova J."/>
            <person name="Lieskovska J."/>
            <person name="Langhansova H."/>
            <person name="Kotsyfakis M."/>
            <person name="Chmelar J."/>
            <person name="Kopecky J."/>
        </authorList>
    </citation>
    <scope>FUNCTION (MICROBIAL INFECTION)</scope>
</reference>